<name>MRAZ_AROAE</name>
<sequence length="147" mass="15930">MFQGAIALSLDAKGRLAIPARHRDALVPDGAPLVITAHPHKCLLVYPLSAWEPIRDRIAAMPGFDPRTSAFKRLLVGFAQEEGLDAAGRVLLAGSLRQWAQLEKQVWLVGQGAHFELWSDAGWQAQQEAMLALTGDALPPGFESLAL</sequence>
<accession>Q5P6Y8</accession>
<keyword id="KW-0963">Cytoplasm</keyword>
<keyword id="KW-0238">DNA-binding</keyword>
<keyword id="KW-1185">Reference proteome</keyword>
<keyword id="KW-0677">Repeat</keyword>
<keyword id="KW-0804">Transcription</keyword>
<keyword id="KW-0805">Transcription regulation</keyword>
<comment type="subunit">
    <text evidence="1">Forms oligomers.</text>
</comment>
<comment type="subcellular location">
    <subcellularLocation>
        <location evidence="1">Cytoplasm</location>
        <location evidence="1">Nucleoid</location>
    </subcellularLocation>
</comment>
<comment type="similarity">
    <text evidence="1">Belongs to the MraZ family.</text>
</comment>
<gene>
    <name evidence="1" type="primary">mraZ</name>
    <name type="ordered locus">AZOSEA08000</name>
    <name type="ORF">ebB43</name>
</gene>
<reference key="1">
    <citation type="journal article" date="2005" name="Arch. Microbiol.">
        <title>The genome sequence of an anaerobic aromatic-degrading denitrifying bacterium, strain EbN1.</title>
        <authorList>
            <person name="Rabus R."/>
            <person name="Kube M."/>
            <person name="Heider J."/>
            <person name="Beck A."/>
            <person name="Heitmann K."/>
            <person name="Widdel F."/>
            <person name="Reinhardt R."/>
        </authorList>
    </citation>
    <scope>NUCLEOTIDE SEQUENCE [LARGE SCALE GENOMIC DNA]</scope>
    <source>
        <strain>DSM 19018 / LMG 30748 / EbN1</strain>
    </source>
</reference>
<feature type="chain" id="PRO_0000108454" description="Transcriptional regulator MraZ">
    <location>
        <begin position="1"/>
        <end position="147"/>
    </location>
</feature>
<feature type="domain" description="SpoVT-AbrB 1" evidence="2">
    <location>
        <begin position="5"/>
        <end position="50"/>
    </location>
</feature>
<feature type="domain" description="SpoVT-AbrB 2" evidence="2">
    <location>
        <begin position="79"/>
        <end position="122"/>
    </location>
</feature>
<dbReference type="EMBL" id="CR555306">
    <property type="protein sequence ID" value="CAI06923.1"/>
    <property type="molecule type" value="Genomic_DNA"/>
</dbReference>
<dbReference type="RefSeq" id="WP_011236651.1">
    <property type="nucleotide sequence ID" value="NC_006513.1"/>
</dbReference>
<dbReference type="SMR" id="Q5P6Y8"/>
<dbReference type="STRING" id="76114.ebB43"/>
<dbReference type="KEGG" id="eba:ebB43"/>
<dbReference type="eggNOG" id="COG2001">
    <property type="taxonomic scope" value="Bacteria"/>
</dbReference>
<dbReference type="HOGENOM" id="CLU_107907_2_0_4"/>
<dbReference type="OrthoDB" id="9807753at2"/>
<dbReference type="Proteomes" id="UP000006552">
    <property type="component" value="Chromosome"/>
</dbReference>
<dbReference type="GO" id="GO:0005737">
    <property type="term" value="C:cytoplasm"/>
    <property type="evidence" value="ECO:0007669"/>
    <property type="project" value="UniProtKB-UniRule"/>
</dbReference>
<dbReference type="GO" id="GO:0009295">
    <property type="term" value="C:nucleoid"/>
    <property type="evidence" value="ECO:0007669"/>
    <property type="project" value="UniProtKB-SubCell"/>
</dbReference>
<dbReference type="GO" id="GO:0003700">
    <property type="term" value="F:DNA-binding transcription factor activity"/>
    <property type="evidence" value="ECO:0007669"/>
    <property type="project" value="UniProtKB-UniRule"/>
</dbReference>
<dbReference type="GO" id="GO:0000976">
    <property type="term" value="F:transcription cis-regulatory region binding"/>
    <property type="evidence" value="ECO:0007669"/>
    <property type="project" value="TreeGrafter"/>
</dbReference>
<dbReference type="GO" id="GO:2000143">
    <property type="term" value="P:negative regulation of DNA-templated transcription initiation"/>
    <property type="evidence" value="ECO:0007669"/>
    <property type="project" value="TreeGrafter"/>
</dbReference>
<dbReference type="CDD" id="cd16321">
    <property type="entry name" value="MraZ_C"/>
    <property type="match status" value="1"/>
</dbReference>
<dbReference type="CDD" id="cd16320">
    <property type="entry name" value="MraZ_N"/>
    <property type="match status" value="1"/>
</dbReference>
<dbReference type="Gene3D" id="3.40.1550.20">
    <property type="entry name" value="Transcriptional regulator MraZ domain"/>
    <property type="match status" value="1"/>
</dbReference>
<dbReference type="HAMAP" id="MF_01008">
    <property type="entry name" value="MraZ"/>
    <property type="match status" value="1"/>
</dbReference>
<dbReference type="InterPro" id="IPR003444">
    <property type="entry name" value="MraZ"/>
</dbReference>
<dbReference type="InterPro" id="IPR035644">
    <property type="entry name" value="MraZ_C"/>
</dbReference>
<dbReference type="InterPro" id="IPR020603">
    <property type="entry name" value="MraZ_dom"/>
</dbReference>
<dbReference type="InterPro" id="IPR035642">
    <property type="entry name" value="MraZ_N"/>
</dbReference>
<dbReference type="InterPro" id="IPR038619">
    <property type="entry name" value="MraZ_sf"/>
</dbReference>
<dbReference type="InterPro" id="IPR007159">
    <property type="entry name" value="SpoVT-AbrB_dom"/>
</dbReference>
<dbReference type="InterPro" id="IPR037914">
    <property type="entry name" value="SpoVT-AbrB_sf"/>
</dbReference>
<dbReference type="NCBIfam" id="TIGR00242">
    <property type="entry name" value="division/cell wall cluster transcriptional repressor MraZ"/>
    <property type="match status" value="1"/>
</dbReference>
<dbReference type="PANTHER" id="PTHR34701">
    <property type="entry name" value="TRANSCRIPTIONAL REGULATOR MRAZ"/>
    <property type="match status" value="1"/>
</dbReference>
<dbReference type="PANTHER" id="PTHR34701:SF1">
    <property type="entry name" value="TRANSCRIPTIONAL REGULATOR MRAZ"/>
    <property type="match status" value="1"/>
</dbReference>
<dbReference type="Pfam" id="PF02381">
    <property type="entry name" value="MraZ"/>
    <property type="match status" value="2"/>
</dbReference>
<dbReference type="SUPFAM" id="SSF89447">
    <property type="entry name" value="AbrB/MazE/MraZ-like"/>
    <property type="match status" value="1"/>
</dbReference>
<dbReference type="PROSITE" id="PS51740">
    <property type="entry name" value="SPOVT_ABRB"/>
    <property type="match status" value="2"/>
</dbReference>
<proteinExistence type="inferred from homology"/>
<protein>
    <recommendedName>
        <fullName>Transcriptional regulator MraZ</fullName>
    </recommendedName>
</protein>
<evidence type="ECO:0000255" key="1">
    <source>
        <dbReference type="HAMAP-Rule" id="MF_01008"/>
    </source>
</evidence>
<evidence type="ECO:0000255" key="2">
    <source>
        <dbReference type="PROSITE-ProRule" id="PRU01076"/>
    </source>
</evidence>
<organism>
    <name type="scientific">Aromatoleum aromaticum (strain DSM 19018 / LMG 30748 / EbN1)</name>
    <name type="common">Azoarcus sp. (strain EbN1)</name>
    <dbReference type="NCBI Taxonomy" id="76114"/>
    <lineage>
        <taxon>Bacteria</taxon>
        <taxon>Pseudomonadati</taxon>
        <taxon>Pseudomonadota</taxon>
        <taxon>Betaproteobacteria</taxon>
        <taxon>Rhodocyclales</taxon>
        <taxon>Rhodocyclaceae</taxon>
        <taxon>Aromatoleum</taxon>
    </lineage>
</organism>